<proteinExistence type="inferred from homology"/>
<protein>
    <recommendedName>
        <fullName evidence="1">UvrABC system protein C</fullName>
        <shortName evidence="1">Protein UvrC</shortName>
    </recommendedName>
    <alternativeName>
        <fullName evidence="1">Excinuclease ABC subunit C</fullName>
    </alternativeName>
</protein>
<comment type="function">
    <text evidence="1">The UvrABC repair system catalyzes the recognition and processing of DNA lesions. UvrC both incises the 5' and 3' sides of the lesion. The N-terminal half is responsible for the 3' incision and the C-terminal half is responsible for the 5' incision.</text>
</comment>
<comment type="subunit">
    <text evidence="1">Interacts with UvrB in an incision complex.</text>
</comment>
<comment type="subcellular location">
    <subcellularLocation>
        <location evidence="1">Cytoplasm</location>
    </subcellularLocation>
</comment>
<comment type="similarity">
    <text evidence="1">Belongs to the UvrC family.</text>
</comment>
<keyword id="KW-0963">Cytoplasm</keyword>
<keyword id="KW-0227">DNA damage</keyword>
<keyword id="KW-0228">DNA excision</keyword>
<keyword id="KW-0234">DNA repair</keyword>
<keyword id="KW-0267">Excision nuclease</keyword>
<keyword id="KW-0742">SOS response</keyword>
<evidence type="ECO:0000255" key="1">
    <source>
        <dbReference type="HAMAP-Rule" id="MF_00203"/>
    </source>
</evidence>
<sequence>MADLLSSLKNLSHSSGVYQYFDKNHQLLYIGKAKNLKKRIKSYFSVRNNEITPNYRTSLRIQMMVKQIAFLETILVENEQDALILENSLIKQLKPKYNILLRDDKTYPYIYMDFSTDFPIPLITRKILKQPGVKYFGPFTSGAKDILDSLYELLPLVQKKNCIKDKKACMFYQIERCKAPCENKITKEEYLKIAKECLEMIENKDKLIKELELKMERLSNNLRFEEALIYRDRIAKIQKIAPFTCMDLAKLYDLDIFAFYGKGNKAVLVKMFMRGGKIISSAFEKIHSLNGFDTDEAMKQAIINHYQSHLPLMPEQILLNACSNETLKELQEFISHQYSKKIALSIPKKGDKLALIEIAMKNAQEIFSQEKTSNEDLILEEARSLFKLECMPYRVEIFDTSHHANSQCVGGMVVYENHEFQKNSYRRYHLKGSNEYTQMSELLTRRALDFAKEPPPNLWVIDGGRVQLNIALEILKSSGSFVEVIAISKEKRDSKAYRSKGGAKDIIHTASDTFKLLPSDKRLQWVQKLRDESHRYAINFHRSTKLKNMKQIALLKEKGIGEASVKKLLDYFGSFEAIEKASEQEKNAVLKKRI</sequence>
<accession>B2UT08</accession>
<gene>
    <name evidence="1" type="primary">uvrC</name>
    <name type="ordered locus">HPSH_02700</name>
</gene>
<dbReference type="EMBL" id="CP001072">
    <property type="protein sequence ID" value="ACD47990.1"/>
    <property type="molecule type" value="Genomic_DNA"/>
</dbReference>
<dbReference type="RefSeq" id="WP_000774343.1">
    <property type="nucleotide sequence ID" value="NC_010698.2"/>
</dbReference>
<dbReference type="SMR" id="B2UT08"/>
<dbReference type="KEGG" id="hps:HPSH_02700"/>
<dbReference type="HOGENOM" id="CLU_014841_3_2_7"/>
<dbReference type="GO" id="GO:0005737">
    <property type="term" value="C:cytoplasm"/>
    <property type="evidence" value="ECO:0007669"/>
    <property type="project" value="UniProtKB-SubCell"/>
</dbReference>
<dbReference type="GO" id="GO:0009380">
    <property type="term" value="C:excinuclease repair complex"/>
    <property type="evidence" value="ECO:0007669"/>
    <property type="project" value="InterPro"/>
</dbReference>
<dbReference type="GO" id="GO:0003677">
    <property type="term" value="F:DNA binding"/>
    <property type="evidence" value="ECO:0007669"/>
    <property type="project" value="UniProtKB-UniRule"/>
</dbReference>
<dbReference type="GO" id="GO:0009381">
    <property type="term" value="F:excinuclease ABC activity"/>
    <property type="evidence" value="ECO:0007669"/>
    <property type="project" value="UniProtKB-UniRule"/>
</dbReference>
<dbReference type="GO" id="GO:0006289">
    <property type="term" value="P:nucleotide-excision repair"/>
    <property type="evidence" value="ECO:0007669"/>
    <property type="project" value="UniProtKB-UniRule"/>
</dbReference>
<dbReference type="GO" id="GO:0009432">
    <property type="term" value="P:SOS response"/>
    <property type="evidence" value="ECO:0007669"/>
    <property type="project" value="UniProtKB-UniRule"/>
</dbReference>
<dbReference type="CDD" id="cd10434">
    <property type="entry name" value="GIY-YIG_UvrC_Cho"/>
    <property type="match status" value="1"/>
</dbReference>
<dbReference type="FunFam" id="3.40.1440.10:FF:000001">
    <property type="entry name" value="UvrABC system protein C"/>
    <property type="match status" value="1"/>
</dbReference>
<dbReference type="Gene3D" id="1.10.150.20">
    <property type="entry name" value="5' to 3' exonuclease, C-terminal subdomain"/>
    <property type="match status" value="1"/>
</dbReference>
<dbReference type="Gene3D" id="3.40.1440.10">
    <property type="entry name" value="GIY-YIG endonuclease"/>
    <property type="match status" value="1"/>
</dbReference>
<dbReference type="Gene3D" id="4.10.860.10">
    <property type="entry name" value="UVR domain"/>
    <property type="match status" value="1"/>
</dbReference>
<dbReference type="Gene3D" id="3.30.420.340">
    <property type="entry name" value="UvrC, RNAse H endonuclease domain"/>
    <property type="match status" value="1"/>
</dbReference>
<dbReference type="HAMAP" id="MF_00203">
    <property type="entry name" value="UvrC"/>
    <property type="match status" value="1"/>
</dbReference>
<dbReference type="InterPro" id="IPR000305">
    <property type="entry name" value="GIY-YIG_endonuc"/>
</dbReference>
<dbReference type="InterPro" id="IPR035901">
    <property type="entry name" value="GIY-YIG_endonuc_sf"/>
</dbReference>
<dbReference type="InterPro" id="IPR047296">
    <property type="entry name" value="GIY-YIG_UvrC_Cho"/>
</dbReference>
<dbReference type="InterPro" id="IPR010994">
    <property type="entry name" value="RuvA_2-like"/>
</dbReference>
<dbReference type="InterPro" id="IPR001943">
    <property type="entry name" value="UVR_dom"/>
</dbReference>
<dbReference type="InterPro" id="IPR036876">
    <property type="entry name" value="UVR_dom_sf"/>
</dbReference>
<dbReference type="InterPro" id="IPR050066">
    <property type="entry name" value="UvrABC_protein_C"/>
</dbReference>
<dbReference type="InterPro" id="IPR004791">
    <property type="entry name" value="UvrC"/>
</dbReference>
<dbReference type="InterPro" id="IPR001162">
    <property type="entry name" value="UvrC_RNase_H_dom"/>
</dbReference>
<dbReference type="InterPro" id="IPR038476">
    <property type="entry name" value="UvrC_RNase_H_dom_sf"/>
</dbReference>
<dbReference type="NCBIfam" id="TIGR00194">
    <property type="entry name" value="uvrC"/>
    <property type="match status" value="1"/>
</dbReference>
<dbReference type="PANTHER" id="PTHR30562:SF1">
    <property type="entry name" value="UVRABC SYSTEM PROTEIN C"/>
    <property type="match status" value="1"/>
</dbReference>
<dbReference type="PANTHER" id="PTHR30562">
    <property type="entry name" value="UVRC/OXIDOREDUCTASE"/>
    <property type="match status" value="1"/>
</dbReference>
<dbReference type="Pfam" id="PF01541">
    <property type="entry name" value="GIY-YIG"/>
    <property type="match status" value="1"/>
</dbReference>
<dbReference type="Pfam" id="PF02151">
    <property type="entry name" value="UVR"/>
    <property type="match status" value="1"/>
</dbReference>
<dbReference type="Pfam" id="PF22920">
    <property type="entry name" value="UvrC_RNaseH"/>
    <property type="match status" value="1"/>
</dbReference>
<dbReference type="Pfam" id="PF08459">
    <property type="entry name" value="UvrC_RNaseH_dom"/>
    <property type="match status" value="1"/>
</dbReference>
<dbReference type="SMART" id="SM00465">
    <property type="entry name" value="GIYc"/>
    <property type="match status" value="1"/>
</dbReference>
<dbReference type="SUPFAM" id="SSF46600">
    <property type="entry name" value="C-terminal UvrC-binding domain of UvrB"/>
    <property type="match status" value="1"/>
</dbReference>
<dbReference type="SUPFAM" id="SSF82771">
    <property type="entry name" value="GIY-YIG endonuclease"/>
    <property type="match status" value="1"/>
</dbReference>
<dbReference type="SUPFAM" id="SSF47781">
    <property type="entry name" value="RuvA domain 2-like"/>
    <property type="match status" value="1"/>
</dbReference>
<dbReference type="PROSITE" id="PS50164">
    <property type="entry name" value="GIY_YIG"/>
    <property type="match status" value="1"/>
</dbReference>
<dbReference type="PROSITE" id="PS50151">
    <property type="entry name" value="UVR"/>
    <property type="match status" value="1"/>
</dbReference>
<dbReference type="PROSITE" id="PS50165">
    <property type="entry name" value="UVRC"/>
    <property type="match status" value="1"/>
</dbReference>
<organism>
    <name type="scientific">Helicobacter pylori (strain Shi470)</name>
    <dbReference type="NCBI Taxonomy" id="512562"/>
    <lineage>
        <taxon>Bacteria</taxon>
        <taxon>Pseudomonadati</taxon>
        <taxon>Campylobacterota</taxon>
        <taxon>Epsilonproteobacteria</taxon>
        <taxon>Campylobacterales</taxon>
        <taxon>Helicobacteraceae</taxon>
        <taxon>Helicobacter</taxon>
    </lineage>
</organism>
<name>UVRC_HELPS</name>
<reference key="1">
    <citation type="submission" date="2008-05" db="EMBL/GenBank/DDBJ databases">
        <title>Genome sequence of Helicobacter pylori from the remote Amazon: traces of Asian ancestry of the first Americans.</title>
        <authorList>
            <person name="Kersulyte D."/>
            <person name="Kalia A."/>
            <person name="Gilman R.H."/>
            <person name="Berg D.E."/>
        </authorList>
    </citation>
    <scope>NUCLEOTIDE SEQUENCE [LARGE SCALE GENOMIC DNA]</scope>
    <source>
        <strain>Shi470</strain>
    </source>
</reference>
<feature type="chain" id="PRO_1000099490" description="UvrABC system protein C">
    <location>
        <begin position="1"/>
        <end position="594"/>
    </location>
</feature>
<feature type="domain" description="GIY-YIG" evidence="1">
    <location>
        <begin position="13"/>
        <end position="99"/>
    </location>
</feature>
<feature type="domain" description="UVR" evidence="1">
    <location>
        <begin position="205"/>
        <end position="240"/>
    </location>
</feature>